<reference key="1">
    <citation type="journal article" date="2001" name="Nature">
        <title>Genome sequence of enterohaemorrhagic Escherichia coli O157:H7.</title>
        <authorList>
            <person name="Perna N.T."/>
            <person name="Plunkett G. III"/>
            <person name="Burland V."/>
            <person name="Mau B."/>
            <person name="Glasner J.D."/>
            <person name="Rose D.J."/>
            <person name="Mayhew G.F."/>
            <person name="Evans P.S."/>
            <person name="Gregor J."/>
            <person name="Kirkpatrick H.A."/>
            <person name="Posfai G."/>
            <person name="Hackett J."/>
            <person name="Klink S."/>
            <person name="Boutin A."/>
            <person name="Shao Y."/>
            <person name="Miller L."/>
            <person name="Grotbeck E.J."/>
            <person name="Davis N.W."/>
            <person name="Lim A."/>
            <person name="Dimalanta E.T."/>
            <person name="Potamousis K."/>
            <person name="Apodaca J."/>
            <person name="Anantharaman T.S."/>
            <person name="Lin J."/>
            <person name="Yen G."/>
            <person name="Schwartz D.C."/>
            <person name="Welch R.A."/>
            <person name="Blattner F.R."/>
        </authorList>
    </citation>
    <scope>NUCLEOTIDE SEQUENCE [LARGE SCALE GENOMIC DNA]</scope>
    <source>
        <strain>O157:H7 / EDL933 / ATCC 700927 / EHEC</strain>
    </source>
</reference>
<reference key="2">
    <citation type="journal article" date="2001" name="DNA Res.">
        <title>Complete genome sequence of enterohemorrhagic Escherichia coli O157:H7 and genomic comparison with a laboratory strain K-12.</title>
        <authorList>
            <person name="Hayashi T."/>
            <person name="Makino K."/>
            <person name="Ohnishi M."/>
            <person name="Kurokawa K."/>
            <person name="Ishii K."/>
            <person name="Yokoyama K."/>
            <person name="Han C.-G."/>
            <person name="Ohtsubo E."/>
            <person name="Nakayama K."/>
            <person name="Murata T."/>
            <person name="Tanaka M."/>
            <person name="Tobe T."/>
            <person name="Iida T."/>
            <person name="Takami H."/>
            <person name="Honda T."/>
            <person name="Sasakawa C."/>
            <person name="Ogasawara N."/>
            <person name="Yasunaga T."/>
            <person name="Kuhara S."/>
            <person name="Shiba T."/>
            <person name="Hattori M."/>
            <person name="Shinagawa H."/>
        </authorList>
    </citation>
    <scope>NUCLEOTIDE SEQUENCE [LARGE SCALE GENOMIC DNA]</scope>
    <source>
        <strain>O157:H7 / Sakai / RIMD 0509952 / EHEC</strain>
    </source>
</reference>
<protein>
    <recommendedName>
        <fullName>NADH-quinone oxidoreductase subunit G</fullName>
        <ecNumber>7.1.1.-</ecNumber>
    </recommendedName>
    <alternativeName>
        <fullName>NADH dehydrogenase I subunit G</fullName>
    </alternativeName>
    <alternativeName>
        <fullName>NDH-1 subunit G</fullName>
    </alternativeName>
    <alternativeName>
        <fullName>NUO7</fullName>
    </alternativeName>
</protein>
<gene>
    <name type="primary">nuoG</name>
    <name type="ordered locus">Z3542</name>
    <name type="ordered locus">ECs3167</name>
</gene>
<comment type="function">
    <text evidence="1">NDH-1 shuttles electrons from NADH, via FMN and iron-sulfur (Fe-S) centers, to quinones in the respiratory chain. The immediate electron acceptor for the enzyme in this species is believed to be ubiquinone. Couples the redox reaction to proton translocation (for every two electrons transferred, four hydrogen ions are translocated across the cytoplasmic membrane), and thus conserves the redox energy in a proton gradient (By similarity).</text>
</comment>
<comment type="catalytic activity">
    <reaction>
        <text>a quinone + NADH + 5 H(+)(in) = a quinol + NAD(+) + 4 H(+)(out)</text>
        <dbReference type="Rhea" id="RHEA:57888"/>
        <dbReference type="ChEBI" id="CHEBI:15378"/>
        <dbReference type="ChEBI" id="CHEBI:24646"/>
        <dbReference type="ChEBI" id="CHEBI:57540"/>
        <dbReference type="ChEBI" id="CHEBI:57945"/>
        <dbReference type="ChEBI" id="CHEBI:132124"/>
    </reaction>
</comment>
<comment type="cofactor">
    <cofactor evidence="1">
        <name>[2Fe-2S] cluster</name>
        <dbReference type="ChEBI" id="CHEBI:190135"/>
    </cofactor>
    <text evidence="1">Binds 1 [2Fe-2S] cluster per subunit.</text>
</comment>
<comment type="cofactor">
    <cofactor evidence="1">
        <name>[4Fe-4S] cluster</name>
        <dbReference type="ChEBI" id="CHEBI:49883"/>
    </cofactor>
    <text evidence="1">Binds 3 [4Fe-4S] clusters per subunit.</text>
</comment>
<comment type="subunit">
    <text>Composed of 13 different subunits. Subunits NuoCD, E, F, and G constitute the peripheral sector of the complex.</text>
</comment>
<comment type="similarity">
    <text evidence="6">Belongs to the complex I 75 kDa subunit family.</text>
</comment>
<comment type="sequence caution" evidence="6">
    <conflict type="erroneous initiation">
        <sequence resource="EMBL-CDS" id="AAG57412"/>
    </conflict>
    <text>Extended N-terminus.</text>
</comment>
<accession>Q8XCX2</accession>
<feature type="initiator methionine" description="Removed" evidence="1">
    <location>
        <position position="1"/>
    </location>
</feature>
<feature type="chain" id="PRO_0000118547" description="NADH-quinone oxidoreductase subunit G">
    <location>
        <begin position="2"/>
        <end position="908"/>
    </location>
</feature>
<feature type="domain" description="2Fe-2S ferredoxin-type" evidence="3">
    <location>
        <begin position="2"/>
        <end position="83"/>
    </location>
</feature>
<feature type="domain" description="4Fe-4S His(Cys)3-ligated-type" evidence="5">
    <location>
        <begin position="83"/>
        <end position="122"/>
    </location>
</feature>
<feature type="domain" description="4Fe-4S Mo/W bis-MGD-type" evidence="4">
    <location>
        <begin position="221"/>
        <end position="277"/>
    </location>
</feature>
<feature type="binding site" evidence="1">
    <location>
        <position position="34"/>
    </location>
    <ligand>
        <name>[2Fe-2S] cluster</name>
        <dbReference type="ChEBI" id="CHEBI:190135"/>
    </ligand>
</feature>
<feature type="binding site" evidence="1">
    <location>
        <position position="45"/>
    </location>
    <ligand>
        <name>[2Fe-2S] cluster</name>
        <dbReference type="ChEBI" id="CHEBI:190135"/>
    </ligand>
</feature>
<feature type="binding site" evidence="1">
    <location>
        <position position="48"/>
    </location>
    <ligand>
        <name>[2Fe-2S] cluster</name>
        <dbReference type="ChEBI" id="CHEBI:190135"/>
    </ligand>
</feature>
<feature type="binding site" evidence="1">
    <location>
        <position position="67"/>
    </location>
    <ligand>
        <name>[2Fe-2S] cluster</name>
        <dbReference type="ChEBI" id="CHEBI:190135"/>
    </ligand>
</feature>
<feature type="binding site" evidence="5">
    <location>
        <position position="99"/>
    </location>
    <ligand>
        <name>[4Fe-4S] cluster</name>
        <dbReference type="ChEBI" id="CHEBI:49883"/>
        <label>1</label>
    </ligand>
</feature>
<feature type="binding site" evidence="5">
    <location>
        <position position="103"/>
    </location>
    <ligand>
        <name>[4Fe-4S] cluster</name>
        <dbReference type="ChEBI" id="CHEBI:49883"/>
        <label>1</label>
    </ligand>
</feature>
<feature type="binding site" evidence="5">
    <location>
        <position position="106"/>
    </location>
    <ligand>
        <name>[4Fe-4S] cluster</name>
        <dbReference type="ChEBI" id="CHEBI:49883"/>
        <label>1</label>
    </ligand>
</feature>
<feature type="binding site" evidence="5">
    <location>
        <position position="112"/>
    </location>
    <ligand>
        <name>[4Fe-4S] cluster</name>
        <dbReference type="ChEBI" id="CHEBI:49883"/>
        <label>1</label>
    </ligand>
</feature>
<feature type="binding site" evidence="1">
    <location>
        <position position="151"/>
    </location>
    <ligand>
        <name>[4Fe-4S] cluster</name>
        <dbReference type="ChEBI" id="CHEBI:49883"/>
        <label>2</label>
    </ligand>
</feature>
<feature type="binding site" evidence="1">
    <location>
        <position position="154"/>
    </location>
    <ligand>
        <name>[4Fe-4S] cluster</name>
        <dbReference type="ChEBI" id="CHEBI:49883"/>
        <label>2</label>
    </ligand>
</feature>
<feature type="binding site" evidence="1">
    <location>
        <position position="157"/>
    </location>
    <ligand>
        <name>[4Fe-4S] cluster</name>
        <dbReference type="ChEBI" id="CHEBI:49883"/>
        <label>2</label>
    </ligand>
</feature>
<feature type="binding site" evidence="1">
    <location>
        <position position="201"/>
    </location>
    <ligand>
        <name>[4Fe-4S] cluster</name>
        <dbReference type="ChEBI" id="CHEBI:49883"/>
        <label>2</label>
    </ligand>
</feature>
<feature type="binding site" evidence="2">
    <location>
        <position position="228"/>
    </location>
    <ligand>
        <name>[4Fe-4S] cluster</name>
        <dbReference type="ChEBI" id="CHEBI:49883"/>
        <label>3</label>
    </ligand>
</feature>
<feature type="binding site" evidence="2">
    <location>
        <position position="231"/>
    </location>
    <ligand>
        <name>[4Fe-4S] cluster</name>
        <dbReference type="ChEBI" id="CHEBI:49883"/>
        <label>3</label>
    </ligand>
</feature>
<feature type="binding site" evidence="2">
    <location>
        <position position="235"/>
    </location>
    <ligand>
        <name>[4Fe-4S] cluster</name>
        <dbReference type="ChEBI" id="CHEBI:49883"/>
        <label>3</label>
    </ligand>
</feature>
<feature type="binding site" evidence="2">
    <location>
        <position position="263"/>
    </location>
    <ligand>
        <name>[4Fe-4S] cluster</name>
        <dbReference type="ChEBI" id="CHEBI:49883"/>
        <label>3</label>
    </ligand>
</feature>
<sequence length="908" mass="100303">MATIHVDGKEYEVNGADNLLEACLSLGLDIPYFCWHPALGSVGACRQCAVKQYQNAEDTRGRLVMSCMTPASDGTFISIDDEEAKQFRESVVEWLMTNHPHDCPVCEEGGNCHLQDMTVMTGHSFRRYRFTKRTHRNQDLGPFISHEMNRCIACYRCVRYYKDYADGTDLGVYGAHDNVYFGRPEDGTLESEFSGNLVEICPTGVFTDKTHSERYNRKWDMQFAPSICQQCSIGCNISPGERYGELRRIENRYNGTVNHYFLCDRGRFGYGYVNLKDRPRQPVQRRGDDFITLNAEQAMQGAADILRQSKKVIGIGSPRASVESNFALRELVGEENFYTGIAHGEQERLQLALKVLREGGIYTPALREIESYDAVLVLGEDVTQTGARVALAVRQAVKGKAREMAAAQKVADWQIAAILNIGQRAKHPLFVTNVDDTRLDDIAAWTYRAPVEDQARLGFAIAHALDNSAPAVDGIEPELQSKIDVIVQALAGAKKPLIISGTNAGSLEVIQAAANVAKALKGRGADVGITMIARSVNSMGLGIMGGGSLEEALTELETGRADAVVVLENDLHRHASATRVNAALAKAPLVMVVDHQRTAIMENAHLVLSAASFAESDGTVINNEGRAQRFFQVYDPAYYDSKTVMLESWRWLHSLHSTLLSREVDWTQLDHVIDAVVAKIPELAGIKDAAPDATFRIRGQKLAREPHRYSGRTAMRANISVHEPRQPQDIDTMFTFSMEGNNQPTAHRSQVPFAWAPGWNSPQAWNKFQDEVGGKLRFGDPGVRLFETSENGLDYFTSVPARFQPQDGKWRIAPYYHLFGSDELSQRAPVFQCRMPQPYIKLNPADAAKLGVNAGTRVSFSYDGNTVTLPVEIAEGLTAGQVGLPMGMSGIAPVLAGAHLEDLKEAQQ</sequence>
<organism>
    <name type="scientific">Escherichia coli O157:H7</name>
    <dbReference type="NCBI Taxonomy" id="83334"/>
    <lineage>
        <taxon>Bacteria</taxon>
        <taxon>Pseudomonadati</taxon>
        <taxon>Pseudomonadota</taxon>
        <taxon>Gammaproteobacteria</taxon>
        <taxon>Enterobacterales</taxon>
        <taxon>Enterobacteriaceae</taxon>
        <taxon>Escherichia</taxon>
    </lineage>
</organism>
<proteinExistence type="inferred from homology"/>
<evidence type="ECO:0000250" key="1"/>
<evidence type="ECO:0000255" key="2"/>
<evidence type="ECO:0000255" key="3">
    <source>
        <dbReference type="PROSITE-ProRule" id="PRU00465"/>
    </source>
</evidence>
<evidence type="ECO:0000255" key="4">
    <source>
        <dbReference type="PROSITE-ProRule" id="PRU01004"/>
    </source>
</evidence>
<evidence type="ECO:0000255" key="5">
    <source>
        <dbReference type="PROSITE-ProRule" id="PRU01184"/>
    </source>
</evidence>
<evidence type="ECO:0000305" key="6"/>
<dbReference type="EC" id="7.1.1.-"/>
<dbReference type="EMBL" id="AE005174">
    <property type="protein sequence ID" value="AAG57412.1"/>
    <property type="status" value="ALT_INIT"/>
    <property type="molecule type" value="Genomic_DNA"/>
</dbReference>
<dbReference type="EMBL" id="BA000007">
    <property type="protein sequence ID" value="BAB36590.2"/>
    <property type="molecule type" value="Genomic_DNA"/>
</dbReference>
<dbReference type="PIR" id="G91024">
    <property type="entry name" value="G91024"/>
</dbReference>
<dbReference type="PIR" id="H85868">
    <property type="entry name" value="H85868"/>
</dbReference>
<dbReference type="RefSeq" id="NP_311194.2">
    <property type="nucleotide sequence ID" value="NC_002695.1"/>
</dbReference>
<dbReference type="RefSeq" id="WP_001301902.1">
    <property type="nucleotide sequence ID" value="NZ_VOAI01000001.1"/>
</dbReference>
<dbReference type="SMR" id="Q8XCX2"/>
<dbReference type="STRING" id="155864.Z3542"/>
<dbReference type="GeneID" id="916875"/>
<dbReference type="KEGG" id="ece:Z3542"/>
<dbReference type="KEGG" id="ecs:ECs_3167"/>
<dbReference type="PATRIC" id="fig|386585.9.peg.3305"/>
<dbReference type="eggNOG" id="COG1034">
    <property type="taxonomic scope" value="Bacteria"/>
</dbReference>
<dbReference type="HOGENOM" id="CLU_000422_11_4_6"/>
<dbReference type="OMA" id="GRIVMSC"/>
<dbReference type="Proteomes" id="UP000000558">
    <property type="component" value="Chromosome"/>
</dbReference>
<dbReference type="Proteomes" id="UP000002519">
    <property type="component" value="Chromosome"/>
</dbReference>
<dbReference type="GO" id="GO:0016020">
    <property type="term" value="C:membrane"/>
    <property type="evidence" value="ECO:0007669"/>
    <property type="project" value="InterPro"/>
</dbReference>
<dbReference type="GO" id="GO:1990204">
    <property type="term" value="C:oxidoreductase complex"/>
    <property type="evidence" value="ECO:0007669"/>
    <property type="project" value="UniProtKB-ARBA"/>
</dbReference>
<dbReference type="GO" id="GO:0051537">
    <property type="term" value="F:2 iron, 2 sulfur cluster binding"/>
    <property type="evidence" value="ECO:0007669"/>
    <property type="project" value="UniProtKB-KW"/>
</dbReference>
<dbReference type="GO" id="GO:0051539">
    <property type="term" value="F:4 iron, 4 sulfur cluster binding"/>
    <property type="evidence" value="ECO:0007669"/>
    <property type="project" value="UniProtKB-KW"/>
</dbReference>
<dbReference type="GO" id="GO:0046872">
    <property type="term" value="F:metal ion binding"/>
    <property type="evidence" value="ECO:0007669"/>
    <property type="project" value="UniProtKB-KW"/>
</dbReference>
<dbReference type="GO" id="GO:0043546">
    <property type="term" value="F:molybdopterin cofactor binding"/>
    <property type="evidence" value="ECO:0007669"/>
    <property type="project" value="InterPro"/>
</dbReference>
<dbReference type="GO" id="GO:0008137">
    <property type="term" value="F:NADH dehydrogenase (ubiquinone) activity"/>
    <property type="evidence" value="ECO:0007669"/>
    <property type="project" value="InterPro"/>
</dbReference>
<dbReference type="GO" id="GO:0048038">
    <property type="term" value="F:quinone binding"/>
    <property type="evidence" value="ECO:0007669"/>
    <property type="project" value="UniProtKB-KW"/>
</dbReference>
<dbReference type="GO" id="GO:0042773">
    <property type="term" value="P:ATP synthesis coupled electron transport"/>
    <property type="evidence" value="ECO:0007669"/>
    <property type="project" value="InterPro"/>
</dbReference>
<dbReference type="CDD" id="cd00207">
    <property type="entry name" value="fer2"/>
    <property type="match status" value="1"/>
</dbReference>
<dbReference type="CDD" id="cd02788">
    <property type="entry name" value="MopB_CT_NDH-1_NuoG2-N7"/>
    <property type="match status" value="1"/>
</dbReference>
<dbReference type="CDD" id="cd02771">
    <property type="entry name" value="MopB_NDH-1_NuoG2-N7"/>
    <property type="match status" value="1"/>
</dbReference>
<dbReference type="FunFam" id="2.40.40.20:FF:000014">
    <property type="entry name" value="NADH-quinone oxidoreductase"/>
    <property type="match status" value="1"/>
</dbReference>
<dbReference type="FunFam" id="3.10.20.740:FF:000002">
    <property type="entry name" value="NADH-quinone oxidoreductase"/>
    <property type="match status" value="1"/>
</dbReference>
<dbReference type="FunFam" id="3.30.200.210:FF:000004">
    <property type="entry name" value="NADH-quinone oxidoreductase"/>
    <property type="match status" value="1"/>
</dbReference>
<dbReference type="FunFam" id="3.40.50.740:FF:000006">
    <property type="entry name" value="NADH-quinone oxidoreductase"/>
    <property type="match status" value="1"/>
</dbReference>
<dbReference type="Gene3D" id="2.40.40.20">
    <property type="match status" value="1"/>
</dbReference>
<dbReference type="Gene3D" id="3.10.20.740">
    <property type="match status" value="1"/>
</dbReference>
<dbReference type="Gene3D" id="3.30.200.210">
    <property type="match status" value="1"/>
</dbReference>
<dbReference type="Gene3D" id="3.40.50.740">
    <property type="match status" value="1"/>
</dbReference>
<dbReference type="InterPro" id="IPR036010">
    <property type="entry name" value="2Fe-2S_ferredoxin-like_sf"/>
</dbReference>
<dbReference type="InterPro" id="IPR001041">
    <property type="entry name" value="2Fe-2S_ferredoxin-type"/>
</dbReference>
<dbReference type="InterPro" id="IPR009010">
    <property type="entry name" value="Asp_de-COase-like_dom_sf"/>
</dbReference>
<dbReference type="InterPro" id="IPR006657">
    <property type="entry name" value="MoPterin_dinucl-bd_dom"/>
</dbReference>
<dbReference type="InterPro" id="IPR006656">
    <property type="entry name" value="Mopterin_OxRdtase"/>
</dbReference>
<dbReference type="InterPro" id="IPR006963">
    <property type="entry name" value="Mopterin_OxRdtase_4Fe-4S_dom"/>
</dbReference>
<dbReference type="InterPro" id="IPR000283">
    <property type="entry name" value="NADH_UbQ_OxRdtase_75kDa_su_CS"/>
</dbReference>
<dbReference type="InterPro" id="IPR054351">
    <property type="entry name" value="NADH_UbQ_OxRdtase_ferredoxin"/>
</dbReference>
<dbReference type="InterPro" id="IPR010228">
    <property type="entry name" value="NADH_UbQ_OxRdtase_Gsu"/>
</dbReference>
<dbReference type="InterPro" id="IPR019574">
    <property type="entry name" value="NADH_UbQ_OxRdtase_Gsu_4Fe4S-bd"/>
</dbReference>
<dbReference type="InterPro" id="IPR050123">
    <property type="entry name" value="Prok_molybdopt-oxidoreductase"/>
</dbReference>
<dbReference type="NCBIfam" id="TIGR01973">
    <property type="entry name" value="NuoG"/>
    <property type="match status" value="1"/>
</dbReference>
<dbReference type="PANTHER" id="PTHR43105:SF10">
    <property type="entry name" value="NADH-QUINONE OXIDOREDUCTASE SUBUNIT G"/>
    <property type="match status" value="1"/>
</dbReference>
<dbReference type="PANTHER" id="PTHR43105">
    <property type="entry name" value="RESPIRATORY NITRATE REDUCTASE"/>
    <property type="match status" value="1"/>
</dbReference>
<dbReference type="Pfam" id="PF13510">
    <property type="entry name" value="Fer2_4"/>
    <property type="match status" value="1"/>
</dbReference>
<dbReference type="Pfam" id="PF22117">
    <property type="entry name" value="Fer4_Nqo3"/>
    <property type="match status" value="1"/>
</dbReference>
<dbReference type="Pfam" id="PF04879">
    <property type="entry name" value="Molybdop_Fe4S4"/>
    <property type="match status" value="1"/>
</dbReference>
<dbReference type="Pfam" id="PF00384">
    <property type="entry name" value="Molybdopterin"/>
    <property type="match status" value="1"/>
</dbReference>
<dbReference type="Pfam" id="PF01568">
    <property type="entry name" value="Molydop_binding"/>
    <property type="match status" value="1"/>
</dbReference>
<dbReference type="Pfam" id="PF10588">
    <property type="entry name" value="NADH-G_4Fe-4S_3"/>
    <property type="match status" value="1"/>
</dbReference>
<dbReference type="SMART" id="SM00926">
    <property type="entry name" value="Molybdop_Fe4S4"/>
    <property type="match status" value="1"/>
</dbReference>
<dbReference type="SMART" id="SM00929">
    <property type="entry name" value="NADH-G_4Fe-4S_3"/>
    <property type="match status" value="1"/>
</dbReference>
<dbReference type="SUPFAM" id="SSF54292">
    <property type="entry name" value="2Fe-2S ferredoxin-like"/>
    <property type="match status" value="1"/>
</dbReference>
<dbReference type="SUPFAM" id="SSF54862">
    <property type="entry name" value="4Fe-4S ferredoxins"/>
    <property type="match status" value="1"/>
</dbReference>
<dbReference type="SUPFAM" id="SSF50692">
    <property type="entry name" value="ADC-like"/>
    <property type="match status" value="1"/>
</dbReference>
<dbReference type="SUPFAM" id="SSF53706">
    <property type="entry name" value="Formate dehydrogenase/DMSO reductase, domains 1-3"/>
    <property type="match status" value="1"/>
</dbReference>
<dbReference type="PROSITE" id="PS51085">
    <property type="entry name" value="2FE2S_FER_2"/>
    <property type="match status" value="1"/>
</dbReference>
<dbReference type="PROSITE" id="PS51839">
    <property type="entry name" value="4FE4S_HC3"/>
    <property type="match status" value="1"/>
</dbReference>
<dbReference type="PROSITE" id="PS51669">
    <property type="entry name" value="4FE4S_MOW_BIS_MGD"/>
    <property type="match status" value="1"/>
</dbReference>
<dbReference type="PROSITE" id="PS00641">
    <property type="entry name" value="COMPLEX1_75K_1"/>
    <property type="match status" value="1"/>
</dbReference>
<dbReference type="PROSITE" id="PS00642">
    <property type="entry name" value="COMPLEX1_75K_2"/>
    <property type="match status" value="1"/>
</dbReference>
<dbReference type="PROSITE" id="PS00643">
    <property type="entry name" value="COMPLEX1_75K_3"/>
    <property type="match status" value="1"/>
</dbReference>
<keyword id="KW-0001">2Fe-2S</keyword>
<keyword id="KW-0004">4Fe-4S</keyword>
<keyword id="KW-0408">Iron</keyword>
<keyword id="KW-0411">Iron-sulfur</keyword>
<keyword id="KW-0479">Metal-binding</keyword>
<keyword id="KW-0520">NAD</keyword>
<keyword id="KW-0874">Quinone</keyword>
<keyword id="KW-1185">Reference proteome</keyword>
<keyword id="KW-1278">Translocase</keyword>
<keyword id="KW-0830">Ubiquinone</keyword>
<name>NUOG_ECO57</name>